<comment type="function">
    <text evidence="1">Usually encoded in the trnK tRNA gene intron. Probably assists in splicing its own and other chloroplast group II introns.</text>
</comment>
<comment type="subcellular location">
    <subcellularLocation>
        <location>Plastid</location>
        <location>Chloroplast</location>
    </subcellularLocation>
</comment>
<comment type="similarity">
    <text evidence="1">Belongs to the intron maturase 2 family. MatK subfamily.</text>
</comment>
<keyword id="KW-0150">Chloroplast</keyword>
<keyword id="KW-0507">mRNA processing</keyword>
<keyword id="KW-0934">Plastid</keyword>
<keyword id="KW-0694">RNA-binding</keyword>
<keyword id="KW-0819">tRNA processing</keyword>
<name>MATK_AMAGR</name>
<evidence type="ECO:0000255" key="1">
    <source>
        <dbReference type="HAMAP-Rule" id="MF_01390"/>
    </source>
</evidence>
<protein>
    <recommendedName>
        <fullName evidence="1">Maturase K</fullName>
    </recommendedName>
    <alternativeName>
        <fullName evidence="1">Intron maturase</fullName>
    </alternativeName>
</protein>
<feature type="chain" id="PRO_0000143225" description="Maturase K">
    <location>
        <begin position="1"/>
        <end position="505"/>
    </location>
</feature>
<sequence>MEKLQGHRELDRSWQHNFFYPLIFQEYIYVFAYDHALNKLILLENAIAKKSSLLIVKRLITRMYQQNHFILSVNDSNQNEIFGHKHKKNLYSQMITEGFAVIVEIPFSLLLISSLEGKEIVESQNLRSIHSIFPFLEDKFLHLNYVLDILIPYPAHLEILVQTLRYWLKDASSLHLLRYFLYEYRNWNSLIRPKESISPFSKRNRRLFLFLYNLLVYEYESLFVILRKQSSYLRSTSFGALLERIHFYGKLKYLVKVKVKVFGVILWLFKEPFLHYVRYQGKCLLASKGTSFLMYKWKYYFIAFWQCHFSVWSQPRRIYINQLSNYSLDFMGFISNVGLNSSVIRSQMLENSFLVDNIIKKFDTIVPIIPLVGSLAKAKFCNGLGHPISKSVWTDLSDADIIDRFGRICRNLSHYYSGSSRKKSLYRIKYILRLSCARTLSRKHKSTVRAFLKRLGSEFLEEFFTEEEKVLSLILPRDSSTLSGFYRGRVWYLDIICIHNLANDE</sequence>
<gene>
    <name evidence="1" type="primary">matK</name>
</gene>
<dbReference type="EMBL" id="AY514808">
    <property type="protein sequence ID" value="AAT28238.1"/>
    <property type="molecule type" value="Genomic_DNA"/>
</dbReference>
<dbReference type="GO" id="GO:0009507">
    <property type="term" value="C:chloroplast"/>
    <property type="evidence" value="ECO:0007669"/>
    <property type="project" value="UniProtKB-SubCell"/>
</dbReference>
<dbReference type="GO" id="GO:0003723">
    <property type="term" value="F:RNA binding"/>
    <property type="evidence" value="ECO:0007669"/>
    <property type="project" value="UniProtKB-KW"/>
</dbReference>
<dbReference type="GO" id="GO:0006397">
    <property type="term" value="P:mRNA processing"/>
    <property type="evidence" value="ECO:0007669"/>
    <property type="project" value="UniProtKB-KW"/>
</dbReference>
<dbReference type="GO" id="GO:0008380">
    <property type="term" value="P:RNA splicing"/>
    <property type="evidence" value="ECO:0007669"/>
    <property type="project" value="UniProtKB-UniRule"/>
</dbReference>
<dbReference type="GO" id="GO:0008033">
    <property type="term" value="P:tRNA processing"/>
    <property type="evidence" value="ECO:0007669"/>
    <property type="project" value="UniProtKB-KW"/>
</dbReference>
<dbReference type="HAMAP" id="MF_01390">
    <property type="entry name" value="MatK"/>
    <property type="match status" value="1"/>
</dbReference>
<dbReference type="InterPro" id="IPR024937">
    <property type="entry name" value="Domain_X"/>
</dbReference>
<dbReference type="InterPro" id="IPR002866">
    <property type="entry name" value="Maturase_MatK"/>
</dbReference>
<dbReference type="InterPro" id="IPR024942">
    <property type="entry name" value="Maturase_MatK_N"/>
</dbReference>
<dbReference type="PANTHER" id="PTHR34811">
    <property type="entry name" value="MATURASE K"/>
    <property type="match status" value="1"/>
</dbReference>
<dbReference type="PANTHER" id="PTHR34811:SF1">
    <property type="entry name" value="MATURASE K"/>
    <property type="match status" value="1"/>
</dbReference>
<dbReference type="Pfam" id="PF01348">
    <property type="entry name" value="Intron_maturas2"/>
    <property type="match status" value="1"/>
</dbReference>
<dbReference type="Pfam" id="PF01824">
    <property type="entry name" value="MatK_N"/>
    <property type="match status" value="1"/>
</dbReference>
<accession>Q5J300</accession>
<proteinExistence type="inferred from homology"/>
<organism>
    <name type="scientific">Amaranthus greggii</name>
    <name type="common">Gregg's amaranth</name>
    <dbReference type="NCBI Taxonomy" id="240022"/>
    <lineage>
        <taxon>Eukaryota</taxon>
        <taxon>Viridiplantae</taxon>
        <taxon>Streptophyta</taxon>
        <taxon>Embryophyta</taxon>
        <taxon>Tracheophyta</taxon>
        <taxon>Spermatophyta</taxon>
        <taxon>Magnoliopsida</taxon>
        <taxon>eudicotyledons</taxon>
        <taxon>Gunneridae</taxon>
        <taxon>Pentapetalae</taxon>
        <taxon>Caryophyllales</taxon>
        <taxon>Amaranthaceae</taxon>
        <taxon>Amaranthus</taxon>
    </lineage>
</organism>
<geneLocation type="chloroplast"/>
<reference key="1">
    <citation type="journal article" date="2005" name="Ann. Mo. Bot. Gard.">
        <title>Phylogenetics of Amaranthaceae based on matK/trnK sequence data -- evidence from parsimony, likelihood, and Bayesian analyses.</title>
        <authorList>
            <person name="Mueller K."/>
            <person name="Borsch T."/>
        </authorList>
    </citation>
    <scope>NUCLEOTIDE SEQUENCE [GENOMIC DNA]</scope>
</reference>